<keyword id="KW-0489">Methyltransferase</keyword>
<keyword id="KW-0949">S-adenosyl-L-methionine</keyword>
<keyword id="KW-0808">Transferase</keyword>
<keyword id="KW-0819">tRNA processing</keyword>
<reference key="1">
    <citation type="submission" date="2006-12" db="EMBL/GenBank/DDBJ databases">
        <title>Complete sequence of Mycobacterium vanbaalenii PYR-1.</title>
        <authorList>
            <consortium name="US DOE Joint Genome Institute"/>
            <person name="Copeland A."/>
            <person name="Lucas S."/>
            <person name="Lapidus A."/>
            <person name="Barry K."/>
            <person name="Detter J.C."/>
            <person name="Glavina del Rio T."/>
            <person name="Hammon N."/>
            <person name="Israni S."/>
            <person name="Dalin E."/>
            <person name="Tice H."/>
            <person name="Pitluck S."/>
            <person name="Singan V."/>
            <person name="Schmutz J."/>
            <person name="Larimer F."/>
            <person name="Land M."/>
            <person name="Hauser L."/>
            <person name="Kyrpides N."/>
            <person name="Anderson I.J."/>
            <person name="Miller C."/>
            <person name="Richardson P."/>
        </authorList>
    </citation>
    <scope>NUCLEOTIDE SEQUENCE [LARGE SCALE GENOMIC DNA]</scope>
    <source>
        <strain>DSM 7251 / JCM 13017 / BCRC 16820 / KCTC 9966 / NRRL B-24157 / PYR-1</strain>
    </source>
</reference>
<feature type="chain" id="PRO_0000288185" description="tRNA (guanine-N(7)-)-methyltransferase">
    <location>
        <begin position="1"/>
        <end position="266"/>
    </location>
</feature>
<feature type="region of interest" description="Disordered" evidence="3">
    <location>
        <begin position="1"/>
        <end position="32"/>
    </location>
</feature>
<feature type="active site" evidence="1">
    <location>
        <position position="171"/>
    </location>
</feature>
<feature type="binding site" evidence="2">
    <location>
        <position position="96"/>
    </location>
    <ligand>
        <name>S-adenosyl-L-methionine</name>
        <dbReference type="ChEBI" id="CHEBI:59789"/>
    </ligand>
</feature>
<feature type="binding site" evidence="2">
    <location>
        <position position="121"/>
    </location>
    <ligand>
        <name>S-adenosyl-L-methionine</name>
        <dbReference type="ChEBI" id="CHEBI:59789"/>
    </ligand>
</feature>
<feature type="binding site" evidence="2">
    <location>
        <position position="148"/>
    </location>
    <ligand>
        <name>S-adenosyl-L-methionine</name>
        <dbReference type="ChEBI" id="CHEBI:59789"/>
    </ligand>
</feature>
<feature type="binding site" evidence="2">
    <location>
        <position position="171"/>
    </location>
    <ligand>
        <name>S-adenosyl-L-methionine</name>
        <dbReference type="ChEBI" id="CHEBI:59789"/>
    </ligand>
</feature>
<feature type="binding site" evidence="2">
    <location>
        <position position="175"/>
    </location>
    <ligand>
        <name>substrate</name>
    </ligand>
</feature>
<feature type="binding site" evidence="2">
    <location>
        <position position="207"/>
    </location>
    <ligand>
        <name>substrate</name>
    </ligand>
</feature>
<sequence length="266" mass="29174">MSDHGRMHIPESGLATPAAAHSDDPPHPHFNRRVTSFRARRSTISDAQQATWDRLWPELGRQVRDGDAPAGRLDTTPAGRLDTEAWFGRHAPVVLEIGCGTGTSTLAMAQAEPDIDVVAVEVYRRGLAQLLSAMDREGVTNIRLIRGDGVDVLTHMFGPDSLTGVRVFFPDPWPKARHHKRRLLQPDTVALIADRLRPGGILHAATDHMGYAGHIAEVGDAEPRLRRIDPDDAGLPISTARPVTKYQRKALAGTEVAELLWEKTTP</sequence>
<dbReference type="EC" id="2.1.1.33" evidence="2"/>
<dbReference type="EMBL" id="CP000511">
    <property type="protein sequence ID" value="ABM11048.1"/>
    <property type="molecule type" value="Genomic_DNA"/>
</dbReference>
<dbReference type="RefSeq" id="WP_011777522.1">
    <property type="nucleotide sequence ID" value="NC_008726.1"/>
</dbReference>
<dbReference type="SMR" id="A1T1J8"/>
<dbReference type="STRING" id="350058.Mvan_0198"/>
<dbReference type="KEGG" id="mva:Mvan_0198"/>
<dbReference type="eggNOG" id="COG0220">
    <property type="taxonomic scope" value="Bacteria"/>
</dbReference>
<dbReference type="HOGENOM" id="CLU_050910_0_2_11"/>
<dbReference type="UniPathway" id="UPA00989"/>
<dbReference type="Proteomes" id="UP000009159">
    <property type="component" value="Chromosome"/>
</dbReference>
<dbReference type="GO" id="GO:0043527">
    <property type="term" value="C:tRNA methyltransferase complex"/>
    <property type="evidence" value="ECO:0007669"/>
    <property type="project" value="TreeGrafter"/>
</dbReference>
<dbReference type="GO" id="GO:0008176">
    <property type="term" value="F:tRNA (guanine(46)-N7)-methyltransferase activity"/>
    <property type="evidence" value="ECO:0007669"/>
    <property type="project" value="UniProtKB-UniRule"/>
</dbReference>
<dbReference type="CDD" id="cd02440">
    <property type="entry name" value="AdoMet_MTases"/>
    <property type="match status" value="1"/>
</dbReference>
<dbReference type="Gene3D" id="3.40.50.150">
    <property type="entry name" value="Vaccinia Virus protein VP39"/>
    <property type="match status" value="1"/>
</dbReference>
<dbReference type="HAMAP" id="MF_01057">
    <property type="entry name" value="tRNA_methyltr_TrmB"/>
    <property type="match status" value="1"/>
</dbReference>
<dbReference type="InterPro" id="IPR029063">
    <property type="entry name" value="SAM-dependent_MTases_sf"/>
</dbReference>
<dbReference type="InterPro" id="IPR003358">
    <property type="entry name" value="tRNA_(Gua-N-7)_MeTrfase_Trmb"/>
</dbReference>
<dbReference type="InterPro" id="IPR055361">
    <property type="entry name" value="tRNA_methyltr_TrmB_bact"/>
</dbReference>
<dbReference type="NCBIfam" id="TIGR00091">
    <property type="entry name" value="tRNA (guanosine(46)-N7)-methyltransferase TrmB"/>
    <property type="match status" value="1"/>
</dbReference>
<dbReference type="PANTHER" id="PTHR23417">
    <property type="entry name" value="3-DEOXY-D-MANNO-OCTULOSONIC-ACID TRANSFERASE/TRNA GUANINE-N 7 - -METHYLTRANSFERASE"/>
    <property type="match status" value="1"/>
</dbReference>
<dbReference type="PANTHER" id="PTHR23417:SF14">
    <property type="entry name" value="PENTACOTRIPEPTIDE-REPEAT REGION OF PRORP DOMAIN-CONTAINING PROTEIN"/>
    <property type="match status" value="1"/>
</dbReference>
<dbReference type="Pfam" id="PF02390">
    <property type="entry name" value="Methyltransf_4"/>
    <property type="match status" value="1"/>
</dbReference>
<dbReference type="SUPFAM" id="SSF53335">
    <property type="entry name" value="S-adenosyl-L-methionine-dependent methyltransferases"/>
    <property type="match status" value="1"/>
</dbReference>
<dbReference type="PROSITE" id="PS51625">
    <property type="entry name" value="SAM_MT_TRMB"/>
    <property type="match status" value="1"/>
</dbReference>
<evidence type="ECO:0000250" key="1"/>
<evidence type="ECO:0000255" key="2">
    <source>
        <dbReference type="HAMAP-Rule" id="MF_01057"/>
    </source>
</evidence>
<evidence type="ECO:0000256" key="3">
    <source>
        <dbReference type="SAM" id="MobiDB-lite"/>
    </source>
</evidence>
<proteinExistence type="inferred from homology"/>
<organism>
    <name type="scientific">Mycolicibacterium vanbaalenii (strain DSM 7251 / JCM 13017 / BCRC 16820 / KCTC 9966 / NRRL B-24157 / PYR-1)</name>
    <name type="common">Mycobacterium vanbaalenii</name>
    <dbReference type="NCBI Taxonomy" id="350058"/>
    <lineage>
        <taxon>Bacteria</taxon>
        <taxon>Bacillati</taxon>
        <taxon>Actinomycetota</taxon>
        <taxon>Actinomycetes</taxon>
        <taxon>Mycobacteriales</taxon>
        <taxon>Mycobacteriaceae</taxon>
        <taxon>Mycolicibacterium</taxon>
    </lineage>
</organism>
<gene>
    <name evidence="2" type="primary">trmB</name>
    <name type="ordered locus">Mvan_0198</name>
</gene>
<name>TRMB_MYCVP</name>
<accession>A1T1J8</accession>
<protein>
    <recommendedName>
        <fullName evidence="2">tRNA (guanine-N(7)-)-methyltransferase</fullName>
        <ecNumber evidence="2">2.1.1.33</ecNumber>
    </recommendedName>
    <alternativeName>
        <fullName evidence="2">tRNA (guanine(46)-N(7))-methyltransferase</fullName>
    </alternativeName>
    <alternativeName>
        <fullName evidence="2">tRNA(m7G46)-methyltransferase</fullName>
    </alternativeName>
</protein>
<comment type="function">
    <text evidence="2">Catalyzes the formation of N(7)-methylguanine at position 46 (m7G46) in tRNA.</text>
</comment>
<comment type="catalytic activity">
    <reaction evidence="2">
        <text>guanosine(46) in tRNA + S-adenosyl-L-methionine = N(7)-methylguanosine(46) in tRNA + S-adenosyl-L-homocysteine</text>
        <dbReference type="Rhea" id="RHEA:42708"/>
        <dbReference type="Rhea" id="RHEA-COMP:10188"/>
        <dbReference type="Rhea" id="RHEA-COMP:10189"/>
        <dbReference type="ChEBI" id="CHEBI:57856"/>
        <dbReference type="ChEBI" id="CHEBI:59789"/>
        <dbReference type="ChEBI" id="CHEBI:74269"/>
        <dbReference type="ChEBI" id="CHEBI:74480"/>
        <dbReference type="EC" id="2.1.1.33"/>
    </reaction>
</comment>
<comment type="pathway">
    <text evidence="2">tRNA modification; N(7)-methylguanine-tRNA biosynthesis.</text>
</comment>
<comment type="similarity">
    <text evidence="2">Belongs to the class I-like SAM-binding methyltransferase superfamily. TrmB family.</text>
</comment>